<comment type="function">
    <text evidence="1">Involved in the catabolism of quinolinic acid (QA).</text>
</comment>
<comment type="catalytic activity">
    <reaction evidence="1">
        <text>nicotinate beta-D-ribonucleotide + CO2 + diphosphate = quinolinate + 5-phospho-alpha-D-ribose 1-diphosphate + 2 H(+)</text>
        <dbReference type="Rhea" id="RHEA:12733"/>
        <dbReference type="ChEBI" id="CHEBI:15378"/>
        <dbReference type="ChEBI" id="CHEBI:16526"/>
        <dbReference type="ChEBI" id="CHEBI:29959"/>
        <dbReference type="ChEBI" id="CHEBI:33019"/>
        <dbReference type="ChEBI" id="CHEBI:57502"/>
        <dbReference type="ChEBI" id="CHEBI:58017"/>
        <dbReference type="EC" id="2.4.2.19"/>
    </reaction>
</comment>
<comment type="pathway">
    <text evidence="1">Cofactor biosynthesis; NAD(+) biosynthesis; nicotinate D-ribonucleotide from quinolinate: step 1/1.</text>
</comment>
<comment type="subunit">
    <text evidence="2">Hexamer formed by 3 homodimers.</text>
</comment>
<comment type="similarity">
    <text evidence="4">Belongs to the NadC/ModD family.</text>
</comment>
<evidence type="ECO:0000250" key="1">
    <source>
        <dbReference type="UniProtKB" id="Q15274"/>
    </source>
</evidence>
<evidence type="ECO:0000269" key="2">
    <source>
    </source>
</evidence>
<evidence type="ECO:0000303" key="3">
    <source>
    </source>
</evidence>
<evidence type="ECO:0000305" key="4"/>
<evidence type="ECO:0000305" key="5">
    <source>
    </source>
</evidence>
<evidence type="ECO:0000312" key="6">
    <source>
        <dbReference type="EMBL" id="AGF33488.1"/>
    </source>
</evidence>
<evidence type="ECO:0000312" key="7">
    <source>
        <dbReference type="Proteomes" id="UP000008227"/>
    </source>
</evidence>
<evidence type="ECO:0007744" key="8">
    <source>
        <dbReference type="PDB" id="4I9A"/>
    </source>
</evidence>
<evidence type="ECO:0007829" key="9">
    <source>
        <dbReference type="PDB" id="4I9A"/>
    </source>
</evidence>
<accession>I3LK75</accession>
<accession>M1KCW7</accession>
<organism evidence="7">
    <name type="scientific">Sus scrofa</name>
    <name type="common">Pig</name>
    <dbReference type="NCBI Taxonomy" id="9823"/>
    <lineage>
        <taxon>Eukaryota</taxon>
        <taxon>Metazoa</taxon>
        <taxon>Chordata</taxon>
        <taxon>Craniata</taxon>
        <taxon>Vertebrata</taxon>
        <taxon>Euteleostomi</taxon>
        <taxon>Mammalia</taxon>
        <taxon>Eutheria</taxon>
        <taxon>Laurasiatheria</taxon>
        <taxon>Artiodactyla</taxon>
        <taxon>Suina</taxon>
        <taxon>Suidae</taxon>
        <taxon>Sus</taxon>
    </lineage>
</organism>
<name>NADC_PIG</name>
<feature type="chain" id="PRO_0000449543" description="Nicotinate-nucleotide pyrophosphorylase [carboxylating]">
    <location>
        <begin position="1"/>
        <end position="299"/>
    </location>
</feature>
<feature type="region of interest" description="Important for hexamer formation" evidence="1">
    <location>
        <begin position="8"/>
        <end position="12"/>
    </location>
</feature>
<feature type="binding site" evidence="1">
    <location>
        <position position="102"/>
    </location>
    <ligand>
        <name>quinolinate</name>
        <dbReference type="ChEBI" id="CHEBI:29959"/>
    </ligand>
</feature>
<feature type="binding site" evidence="5 8">
    <location>
        <begin position="138"/>
        <end position="139"/>
    </location>
    <ligand>
        <name>quinolinate</name>
        <dbReference type="ChEBI" id="CHEBI:29959"/>
    </ligand>
</feature>
<feature type="binding site" evidence="5 8">
    <location>
        <begin position="160"/>
        <end position="161"/>
    </location>
    <ligand>
        <name>quinolinate</name>
        <dbReference type="ChEBI" id="CHEBI:29959"/>
    </ligand>
</feature>
<feature type="binding site" evidence="5 8">
    <location>
        <position position="171"/>
    </location>
    <ligand>
        <name>quinolinate</name>
        <dbReference type="ChEBI" id="CHEBI:29959"/>
    </ligand>
</feature>
<feature type="binding site" evidence="5 8">
    <location>
        <position position="201"/>
    </location>
    <ligand>
        <name>quinolinate</name>
        <dbReference type="ChEBI" id="CHEBI:29959"/>
    </ligand>
</feature>
<feature type="binding site" evidence="5 8">
    <location>
        <position position="222"/>
    </location>
    <ligand>
        <name>quinolinate</name>
        <dbReference type="ChEBI" id="CHEBI:29959"/>
    </ligand>
</feature>
<feature type="binding site" evidence="5 8">
    <location>
        <begin position="248"/>
        <end position="250"/>
    </location>
    <ligand>
        <name>quinolinate</name>
        <dbReference type="ChEBI" id="CHEBI:29959"/>
    </ligand>
</feature>
<feature type="binding site" evidence="5 8">
    <location>
        <position position="270"/>
    </location>
    <ligand>
        <name>quinolinate</name>
        <dbReference type="ChEBI" id="CHEBI:29959"/>
    </ligand>
</feature>
<feature type="sequence conflict" description="In Ref. 2; AGF33488." evidence="4" ref="2">
    <original>V</original>
    <variation>I</variation>
    <location>
        <position position="53"/>
    </location>
</feature>
<feature type="sequence conflict" description="In Ref. 2; AGF33488." evidence="4" ref="2">
    <original>Q</original>
    <variation>R</variation>
    <location>
        <position position="91"/>
    </location>
</feature>
<feature type="sequence conflict" description="In Ref. 2; AGF33488." evidence="4" ref="2">
    <original>E</original>
    <variation>K</variation>
    <location>
        <position position="182"/>
    </location>
</feature>
<feature type="helix" evidence="9">
    <location>
        <begin position="3"/>
        <end position="9"/>
    </location>
</feature>
<feature type="helix" evidence="9">
    <location>
        <begin position="12"/>
        <end position="26"/>
    </location>
</feature>
<feature type="helix" evidence="9">
    <location>
        <begin position="34"/>
        <end position="37"/>
    </location>
</feature>
<feature type="strand" evidence="9">
    <location>
        <begin position="41"/>
        <end position="48"/>
    </location>
</feature>
<feature type="helix" evidence="9">
    <location>
        <begin position="57"/>
        <end position="66"/>
    </location>
</feature>
<feature type="strand" evidence="9">
    <location>
        <begin position="70"/>
        <end position="75"/>
    </location>
</feature>
<feature type="strand" evidence="9">
    <location>
        <begin position="83"/>
        <end position="93"/>
    </location>
</feature>
<feature type="helix" evidence="9">
    <location>
        <begin position="94"/>
        <end position="127"/>
    </location>
</feature>
<feature type="strand" evidence="9">
    <location>
        <begin position="133"/>
        <end position="135"/>
    </location>
</feature>
<feature type="helix" evidence="9">
    <location>
        <begin position="145"/>
        <end position="154"/>
    </location>
</feature>
<feature type="strand" evidence="9">
    <location>
        <begin position="166"/>
        <end position="170"/>
    </location>
</feature>
<feature type="helix" evidence="9">
    <location>
        <begin position="172"/>
        <end position="178"/>
    </location>
</feature>
<feature type="helix" evidence="9">
    <location>
        <begin position="181"/>
        <end position="192"/>
    </location>
</feature>
<feature type="turn" evidence="9">
    <location>
        <begin position="193"/>
        <end position="195"/>
    </location>
</feature>
<feature type="strand" evidence="9">
    <location>
        <begin position="198"/>
        <end position="204"/>
    </location>
</feature>
<feature type="helix" evidence="9">
    <location>
        <begin position="205"/>
        <end position="214"/>
    </location>
</feature>
<feature type="strand" evidence="9">
    <location>
        <begin position="217"/>
        <end position="223"/>
    </location>
</feature>
<feature type="helix" evidence="9">
    <location>
        <begin position="226"/>
        <end position="239"/>
    </location>
</feature>
<feature type="strand" evidence="9">
    <location>
        <begin position="244"/>
        <end position="250"/>
    </location>
</feature>
<feature type="turn" evidence="9">
    <location>
        <begin position="253"/>
        <end position="255"/>
    </location>
</feature>
<feature type="helix" evidence="9">
    <location>
        <begin position="256"/>
        <end position="259"/>
    </location>
</feature>
<feature type="strand" evidence="9">
    <location>
        <begin position="266"/>
        <end position="268"/>
    </location>
</feature>
<feature type="helix" evidence="9">
    <location>
        <begin position="271"/>
        <end position="274"/>
    </location>
</feature>
<feature type="strand" evidence="9">
    <location>
        <begin position="281"/>
        <end position="285"/>
    </location>
</feature>
<proteinExistence type="evidence at protein level"/>
<gene>
    <name evidence="6" type="primary">QPRT</name>
</gene>
<sequence>MDPEGLALLLPPATLATLADSWLREDCPGLNPVALVTGAAPSQAVLWAKSPGVLAGRPFFDAIFAQVNCQVSWFLPEGSKLVPVAKVAEVQGPAHCLLLGERVALNMLARCSGVASAAATAVETARGTGWAGHVAGTRKTTPGFRLVEKYGLLVGGATSHRYDLGGLVMVKDNHVVAAGGVEQAVQGARRAANFALKVEVECSSLQEALEAAEAGADLVLLDNFRPEELHPTAAALKAQFPTVGVEASGGVTLDNLPQFCGPHIDVISLGMLTQAAPALDFSLKLFAEGTTPVPYARKS</sequence>
<dbReference type="EC" id="2.4.2.19" evidence="5"/>
<dbReference type="EMBL" id="AEMK02000016">
    <property type="status" value="NOT_ANNOTATED_CDS"/>
    <property type="molecule type" value="Genomic_DNA"/>
</dbReference>
<dbReference type="EMBL" id="KC185402">
    <property type="protein sequence ID" value="AGF33488.1"/>
    <property type="molecule type" value="mRNA"/>
</dbReference>
<dbReference type="RefSeq" id="XP_003354604.1">
    <property type="nucleotide sequence ID" value="XM_003354556.4"/>
</dbReference>
<dbReference type="PDB" id="4I9A">
    <property type="method" value="X-ray"/>
    <property type="resolution" value="2.10 A"/>
    <property type="chains" value="A/B=1-288"/>
</dbReference>
<dbReference type="PDBsum" id="4I9A"/>
<dbReference type="SMR" id="I3LK75"/>
<dbReference type="FunCoup" id="I3LK75">
    <property type="interactions" value="133"/>
</dbReference>
<dbReference type="STRING" id="9823.ENSSSCP00000024489"/>
<dbReference type="PaxDb" id="9823-ENSSSCP00000024489"/>
<dbReference type="PeptideAtlas" id="I3LK75"/>
<dbReference type="Ensembl" id="ENSSSCT00000028901.4">
    <property type="protein sequence ID" value="ENSSSCP00000024489.2"/>
    <property type="gene ID" value="ENSSSCG00000027454.4"/>
</dbReference>
<dbReference type="Ensembl" id="ENSSSCT00035083639.1">
    <property type="protein sequence ID" value="ENSSSCP00035034776.1"/>
    <property type="gene ID" value="ENSSSCG00035062217.1"/>
</dbReference>
<dbReference type="Ensembl" id="ENSSSCT00045036063.1">
    <property type="protein sequence ID" value="ENSSSCP00045025077.1"/>
    <property type="gene ID" value="ENSSSCG00045021123.1"/>
</dbReference>
<dbReference type="Ensembl" id="ENSSSCT00065029104.1">
    <property type="protein sequence ID" value="ENSSSCP00065011890.1"/>
    <property type="gene ID" value="ENSSSCG00065021888.1"/>
</dbReference>
<dbReference type="Ensembl" id="ENSSSCT00105035951">
    <property type="protein sequence ID" value="ENSSSCP00105025011"/>
    <property type="gene ID" value="ENSSSCG00105018742"/>
</dbReference>
<dbReference type="Ensembl" id="ENSSSCT00110055083">
    <property type="protein sequence ID" value="ENSSSCP00110038274"/>
    <property type="gene ID" value="ENSSSCG00110028756"/>
</dbReference>
<dbReference type="GeneID" id="100623339"/>
<dbReference type="KEGG" id="ssc:100623339"/>
<dbReference type="CTD" id="23475"/>
<dbReference type="VGNC" id="VGNC:104041">
    <property type="gene designation" value="QPRT"/>
</dbReference>
<dbReference type="eggNOG" id="KOG3008">
    <property type="taxonomic scope" value="Eukaryota"/>
</dbReference>
<dbReference type="GeneTree" id="ENSGT00390000002761"/>
<dbReference type="HOGENOM" id="CLU_039622_1_1_1"/>
<dbReference type="InParanoid" id="I3LK75"/>
<dbReference type="OMA" id="DIVMCDN"/>
<dbReference type="OrthoDB" id="10067394at2759"/>
<dbReference type="TreeFam" id="TF300845"/>
<dbReference type="BRENDA" id="2.4.2.19">
    <property type="organism ID" value="6170"/>
</dbReference>
<dbReference type="Reactome" id="R-SSC-196807">
    <property type="pathway name" value="Nicotinate metabolism"/>
</dbReference>
<dbReference type="UniPathway" id="UPA00253">
    <property type="reaction ID" value="UER00331"/>
</dbReference>
<dbReference type="EvolutionaryTrace" id="I3LK75"/>
<dbReference type="Proteomes" id="UP000008227">
    <property type="component" value="Chromosome 3"/>
</dbReference>
<dbReference type="Proteomes" id="UP000314985">
    <property type="component" value="Unplaced"/>
</dbReference>
<dbReference type="Proteomes" id="UP000694570">
    <property type="component" value="Unplaced"/>
</dbReference>
<dbReference type="Proteomes" id="UP000694571">
    <property type="component" value="Unplaced"/>
</dbReference>
<dbReference type="Proteomes" id="UP000694720">
    <property type="component" value="Unplaced"/>
</dbReference>
<dbReference type="Proteomes" id="UP000694722">
    <property type="component" value="Unplaced"/>
</dbReference>
<dbReference type="Proteomes" id="UP000694723">
    <property type="component" value="Unplaced"/>
</dbReference>
<dbReference type="Proteomes" id="UP000694724">
    <property type="component" value="Unplaced"/>
</dbReference>
<dbReference type="Proteomes" id="UP000694725">
    <property type="component" value="Unplaced"/>
</dbReference>
<dbReference type="Proteomes" id="UP000694726">
    <property type="component" value="Unplaced"/>
</dbReference>
<dbReference type="Proteomes" id="UP000694727">
    <property type="component" value="Unplaced"/>
</dbReference>
<dbReference type="Proteomes" id="UP000694728">
    <property type="component" value="Unplaced"/>
</dbReference>
<dbReference type="Bgee" id="ENSSSCG00000027454">
    <property type="expression patterns" value="Expressed in metanephros cortex and 22 other cell types or tissues"/>
</dbReference>
<dbReference type="ExpressionAtlas" id="I3LK75">
    <property type="expression patterns" value="baseline"/>
</dbReference>
<dbReference type="GO" id="GO:0005737">
    <property type="term" value="C:cytoplasm"/>
    <property type="evidence" value="ECO:0000318"/>
    <property type="project" value="GO_Central"/>
</dbReference>
<dbReference type="GO" id="GO:0042802">
    <property type="term" value="F:identical protein binding"/>
    <property type="evidence" value="ECO:0000353"/>
    <property type="project" value="UniProtKB"/>
</dbReference>
<dbReference type="GO" id="GO:0004514">
    <property type="term" value="F:nicotinate-nucleotide diphosphorylase (carboxylating) activity"/>
    <property type="evidence" value="ECO:0000318"/>
    <property type="project" value="GO_Central"/>
</dbReference>
<dbReference type="GO" id="GO:0000166">
    <property type="term" value="F:nucleotide binding"/>
    <property type="evidence" value="ECO:0007669"/>
    <property type="project" value="UniProtKB-KW"/>
</dbReference>
<dbReference type="GO" id="GO:0009435">
    <property type="term" value="P:NAD biosynthetic process"/>
    <property type="evidence" value="ECO:0000318"/>
    <property type="project" value="GO_Central"/>
</dbReference>
<dbReference type="GO" id="GO:0034213">
    <property type="term" value="P:quinolinate catabolic process"/>
    <property type="evidence" value="ECO:0000318"/>
    <property type="project" value="GO_Central"/>
</dbReference>
<dbReference type="CDD" id="cd01572">
    <property type="entry name" value="QPRTase"/>
    <property type="match status" value="1"/>
</dbReference>
<dbReference type="FunFam" id="3.20.20.70:FF:000090">
    <property type="entry name" value="Nicotinate-nucleotide pyrophosphorylase [carboxylating]"/>
    <property type="match status" value="1"/>
</dbReference>
<dbReference type="FunFam" id="3.90.1170.20:FF:000004">
    <property type="entry name" value="Nicotinate-nucleotide pyrophosphorylase [carboxylating]"/>
    <property type="match status" value="1"/>
</dbReference>
<dbReference type="Gene3D" id="3.20.20.70">
    <property type="entry name" value="Aldolase class I"/>
    <property type="match status" value="1"/>
</dbReference>
<dbReference type="Gene3D" id="3.90.1170.20">
    <property type="entry name" value="Quinolinate phosphoribosyl transferase, N-terminal domain"/>
    <property type="match status" value="1"/>
</dbReference>
<dbReference type="InterPro" id="IPR013785">
    <property type="entry name" value="Aldolase_TIM"/>
</dbReference>
<dbReference type="InterPro" id="IPR004393">
    <property type="entry name" value="NadC"/>
</dbReference>
<dbReference type="InterPro" id="IPR027277">
    <property type="entry name" value="NadC/ModD"/>
</dbReference>
<dbReference type="InterPro" id="IPR036068">
    <property type="entry name" value="Nicotinate_pribotase-like_C"/>
</dbReference>
<dbReference type="InterPro" id="IPR037128">
    <property type="entry name" value="Quinolinate_PRibosylTase_N_sf"/>
</dbReference>
<dbReference type="InterPro" id="IPR002638">
    <property type="entry name" value="Quinolinate_PRibosylTrfase_C"/>
</dbReference>
<dbReference type="InterPro" id="IPR022412">
    <property type="entry name" value="Quinolinate_PRibosylTrfase_N"/>
</dbReference>
<dbReference type="NCBIfam" id="TIGR00078">
    <property type="entry name" value="nadC"/>
    <property type="match status" value="1"/>
</dbReference>
<dbReference type="PANTHER" id="PTHR32179">
    <property type="entry name" value="NICOTINATE-NUCLEOTIDE PYROPHOSPHORYLASE [CARBOXYLATING]"/>
    <property type="match status" value="1"/>
</dbReference>
<dbReference type="PANTHER" id="PTHR32179:SF3">
    <property type="entry name" value="NICOTINATE-NUCLEOTIDE PYROPHOSPHORYLASE [CARBOXYLATING]"/>
    <property type="match status" value="1"/>
</dbReference>
<dbReference type="Pfam" id="PF01729">
    <property type="entry name" value="QRPTase_C"/>
    <property type="match status" value="1"/>
</dbReference>
<dbReference type="Pfam" id="PF02749">
    <property type="entry name" value="QRPTase_N"/>
    <property type="match status" value="1"/>
</dbReference>
<dbReference type="PIRSF" id="PIRSF006250">
    <property type="entry name" value="NadC_ModD"/>
    <property type="match status" value="1"/>
</dbReference>
<dbReference type="SUPFAM" id="SSF51690">
    <property type="entry name" value="Nicotinate/Quinolinate PRTase C-terminal domain-like"/>
    <property type="match status" value="1"/>
</dbReference>
<dbReference type="SUPFAM" id="SSF54675">
    <property type="entry name" value="Nicotinate/Quinolinate PRTase N-terminal domain-like"/>
    <property type="match status" value="1"/>
</dbReference>
<keyword id="KW-0002">3D-structure</keyword>
<keyword id="KW-0328">Glycosyltransferase</keyword>
<keyword id="KW-0547">Nucleotide-binding</keyword>
<keyword id="KW-0662">Pyridine nucleotide biosynthesis</keyword>
<keyword id="KW-1185">Reference proteome</keyword>
<keyword id="KW-0808">Transferase</keyword>
<protein>
    <recommendedName>
        <fullName evidence="4">Nicotinate-nucleotide pyrophosphorylase [carboxylating]</fullName>
        <ecNumber evidence="5">2.4.2.19</ecNumber>
    </recommendedName>
    <alternativeName>
        <fullName evidence="3">Quinolinate phosphoribosyltransferase [decarboxylating]</fullName>
        <shortName evidence="3">QAPRTase</shortName>
        <shortName evidence="4">QPRTase</shortName>
    </alternativeName>
</protein>
<reference evidence="7" key="1">
    <citation type="submission" date="2009-11" db="EMBL/GenBank/DDBJ databases">
        <authorList>
            <consortium name="Porcine genome sequencing project"/>
        </authorList>
    </citation>
    <scope>NUCLEOTIDE SEQUENCE [LARGE SCALE GENOMIC DNA]</scope>
    <source>
        <strain evidence="7">Duroc</strain>
    </source>
</reference>
<reference evidence="6" key="2">
    <citation type="journal article" date="2013" name="PLoS ONE">
        <title>Crystal structure of Sus scrofa quinolinate phosphoribosyltransferase in complex with nicotinate mononucleotide.</title>
        <authorList>
            <person name="Youn H.S."/>
            <person name="Kim M.K."/>
            <person name="Kang G.B."/>
            <person name="Kim T.G."/>
            <person name="Lee J.G."/>
            <person name="An J.Y."/>
            <person name="Park K.R."/>
            <person name="Lee Y."/>
            <person name="Kang J.Y."/>
            <person name="Song H.E."/>
            <person name="Park I."/>
            <person name="Cho C."/>
            <person name="Fukuoka S."/>
            <person name="Eom S.H."/>
        </authorList>
    </citation>
    <scope>NUCLEOTIDE SEQUENCE [MRNA] OF 1-288</scope>
    <scope>X-RAY CRYSTALLOGRAPHY (2.10 ANGSTROMS) OF 5-288 IN COMPLEX WITH NICOTINATE MONONUCLEOTIDE</scope>
    <scope>SUBUNIT</scope>
    <source>
        <tissue evidence="6">Liver</tissue>
    </source>
</reference>